<dbReference type="EMBL" id="AE000516">
    <property type="protein sequence ID" value="AAK45295.1"/>
    <property type="molecule type" value="Genomic_DNA"/>
</dbReference>
<dbReference type="PIR" id="C70622">
    <property type="entry name" value="C70622"/>
</dbReference>
<dbReference type="SMR" id="P9WK58"/>
<dbReference type="KEGG" id="mtc:MT1044"/>
<dbReference type="PATRIC" id="fig|83331.31.peg.1119"/>
<dbReference type="HOGENOM" id="CLU_101788_0_0_11"/>
<dbReference type="Proteomes" id="UP000001020">
    <property type="component" value="Chromosome"/>
</dbReference>
<dbReference type="GO" id="GO:0005886">
    <property type="term" value="C:plasma membrane"/>
    <property type="evidence" value="ECO:0007669"/>
    <property type="project" value="UniProtKB-SubCell"/>
</dbReference>
<dbReference type="Gene3D" id="3.40.1000.10">
    <property type="entry name" value="Mog1/PsbP, alpha/beta/alpha sandwich"/>
    <property type="match status" value="1"/>
</dbReference>
<dbReference type="InterPro" id="IPR019674">
    <property type="entry name" value="Lipoprotein_LpqN/LpqT-like"/>
</dbReference>
<dbReference type="Pfam" id="PF10738">
    <property type="entry name" value="Lpp-LpqN"/>
    <property type="match status" value="1"/>
</dbReference>
<dbReference type="PROSITE" id="PS51257">
    <property type="entry name" value="PROKAR_LIPOPROTEIN"/>
    <property type="match status" value="1"/>
</dbReference>
<protein>
    <recommendedName>
        <fullName>Putative lipoprotein LpqT</fullName>
    </recommendedName>
</protein>
<gene>
    <name type="primary">lpqT</name>
    <name type="ordered locus">MT1044</name>
</gene>
<accession>P9WK58</accession>
<accession>L0T5K8</accession>
<accession>P96384</accession>
<organism>
    <name type="scientific">Mycobacterium tuberculosis (strain CDC 1551 / Oshkosh)</name>
    <dbReference type="NCBI Taxonomy" id="83331"/>
    <lineage>
        <taxon>Bacteria</taxon>
        <taxon>Bacillati</taxon>
        <taxon>Actinomycetota</taxon>
        <taxon>Actinomycetes</taxon>
        <taxon>Mycobacteriales</taxon>
        <taxon>Mycobacteriaceae</taxon>
        <taxon>Mycobacterium</taxon>
        <taxon>Mycobacterium tuberculosis complex</taxon>
    </lineage>
</organism>
<reference key="1">
    <citation type="journal article" date="2002" name="J. Bacteriol.">
        <title>Whole-genome comparison of Mycobacterium tuberculosis clinical and laboratory strains.</title>
        <authorList>
            <person name="Fleischmann R.D."/>
            <person name="Alland D."/>
            <person name="Eisen J.A."/>
            <person name="Carpenter L."/>
            <person name="White O."/>
            <person name="Peterson J.D."/>
            <person name="DeBoy R.T."/>
            <person name="Dodson R.J."/>
            <person name="Gwinn M.L."/>
            <person name="Haft D.H."/>
            <person name="Hickey E.K."/>
            <person name="Kolonay J.F."/>
            <person name="Nelson W.C."/>
            <person name="Umayam L.A."/>
            <person name="Ermolaeva M.D."/>
            <person name="Salzberg S.L."/>
            <person name="Delcher A."/>
            <person name="Utterback T.R."/>
            <person name="Weidman J.F."/>
            <person name="Khouri H.M."/>
            <person name="Gill J."/>
            <person name="Mikula A."/>
            <person name="Bishai W."/>
            <person name="Jacobs W.R. Jr."/>
            <person name="Venter J.C."/>
            <person name="Fraser C.M."/>
        </authorList>
    </citation>
    <scope>NUCLEOTIDE SEQUENCE [LARGE SCALE GENOMIC DNA]</scope>
    <source>
        <strain>CDC 1551 / Oshkosh</strain>
    </source>
</reference>
<feature type="signal peptide" evidence="1">
    <location>
        <begin position="1"/>
        <end position="29"/>
    </location>
</feature>
<feature type="chain" id="PRO_0000427711" description="Putative lipoprotein LpqT">
    <location>
        <begin position="30"/>
        <end position="226"/>
    </location>
</feature>
<feature type="lipid moiety-binding region" description="N-palmitoyl cysteine" evidence="1">
    <location>
        <position position="30"/>
    </location>
</feature>
<feature type="lipid moiety-binding region" description="S-diacylglycerol cysteine" evidence="1">
    <location>
        <position position="30"/>
    </location>
</feature>
<comment type="subcellular location">
    <subcellularLocation>
        <location evidence="1">Cell membrane</location>
        <topology evidence="1">Lipid-anchor</topology>
    </subcellularLocation>
</comment>
<proteinExistence type="inferred from homology"/>
<sequence length="226" mass="24081">MAGRRCPQDSVRPLAVAVAVATLAMSAVACGPKSPDFQSILSTSPTTSAVSTTTEVPVPLWKYLESVGVTGEPVAPSSLTDLTVSIPTPPGWAPMKNPNITPNTEMIAKGESYPTAMLMVFKLHRDFDIAEALKHGTADARLSTNFTELDSSTADFNGFPSSMIQGSYDLHGRRLHTWNRIVFPTGAPPAKQRYLVQLTITSLANEAVKHASDIEAIIAGFVVAAK</sequence>
<keyword id="KW-1003">Cell membrane</keyword>
<keyword id="KW-0449">Lipoprotein</keyword>
<keyword id="KW-0472">Membrane</keyword>
<keyword id="KW-0564">Palmitate</keyword>
<keyword id="KW-1185">Reference proteome</keyword>
<keyword id="KW-0732">Signal</keyword>
<name>LPQT_MYCTO</name>
<evidence type="ECO:0000255" key="1">
    <source>
        <dbReference type="PROSITE-ProRule" id="PRU00303"/>
    </source>
</evidence>